<reference key="1">
    <citation type="journal article" date="2011" name="Cell">
        <title>Insight into structure and assembly of the nuclear pore complex by utilizing the genome of a eukaryotic thermophile.</title>
        <authorList>
            <person name="Amlacher S."/>
            <person name="Sarges P."/>
            <person name="Flemming D."/>
            <person name="van Noort V."/>
            <person name="Kunze R."/>
            <person name="Devos D.P."/>
            <person name="Arumugam M."/>
            <person name="Bork P."/>
            <person name="Hurt E."/>
        </authorList>
    </citation>
    <scope>NUCLEOTIDE SEQUENCE [LARGE SCALE GENOMIC DNA]</scope>
    <source>
        <strain>DSM 1495 / CBS 144.50 / IMI 039719</strain>
    </source>
</reference>
<reference key="2">
    <citation type="journal article" date="2014" name="J. Cell Biol.">
        <title>A network of assembly factors is involved in remodeling rRNA elements during preribosome maturation.</title>
        <authorList>
            <person name="Bassler J."/>
            <person name="Paternoga H."/>
            <person name="Holdermann I."/>
            <person name="Thoms M."/>
            <person name="Granneman S."/>
            <person name="Barrio-Garcia C."/>
            <person name="Nyarko A."/>
            <person name="Lee W."/>
            <person name="Stier G."/>
            <person name="Clark S.A."/>
            <person name="Schraivogel D."/>
            <person name="Kallas M."/>
            <person name="Beckmann R."/>
            <person name="Tollervey D."/>
            <person name="Barbar E."/>
            <person name="Sinning I."/>
            <person name="Hurt E."/>
        </authorList>
    </citation>
    <scope>X-RAY CRYSTALLOGRAPHY (1.80 ANGSTROMS) OF 33-517</scope>
</reference>
<reference key="3">
    <citation type="journal article" date="2015" name="J. Cell Biol.">
        <authorList>
            <person name="Bassler J."/>
            <person name="Paternoga H."/>
            <person name="Holdermann I."/>
            <person name="Thoms M."/>
            <person name="Granneman S."/>
            <person name="Barrio-Garcia C."/>
            <person name="Nyarko A."/>
            <person name="Lee W."/>
            <person name="Stier G."/>
            <person name="Clark S.A."/>
            <person name="Schraivogel D."/>
            <person name="Kallas M."/>
            <person name="Beckmann R."/>
            <person name="Tollervey D."/>
            <person name="Barbar E."/>
            <person name="Sinning I."/>
            <person name="Hurt E."/>
        </authorList>
    </citation>
    <scope>ERRATUM OF PUBMED:25404745</scope>
</reference>
<name>NLE1_CHATD</name>
<accession>G0SC29</accession>
<dbReference type="EMBL" id="GL988045">
    <property type="protein sequence ID" value="EGS18955.1"/>
    <property type="status" value="ALT_SEQ"/>
    <property type="molecule type" value="Genomic_DNA"/>
</dbReference>
<dbReference type="RefSeq" id="XP_006695900.1">
    <property type="nucleotide sequence ID" value="XM_006695837.1"/>
</dbReference>
<dbReference type="PDB" id="4WJS">
    <property type="method" value="X-ray"/>
    <property type="resolution" value="1.80 A"/>
    <property type="chains" value="A=33-517"/>
</dbReference>
<dbReference type="PDB" id="6QTA">
    <property type="method" value="X-ray"/>
    <property type="resolution" value="1.89 A"/>
    <property type="chains" value="B=30-128"/>
</dbReference>
<dbReference type="PDB" id="8PV1">
    <property type="method" value="EM"/>
    <property type="resolution" value="2.56 A"/>
    <property type="chains" value="Ch=1-517"/>
</dbReference>
<dbReference type="PDB" id="8PV3">
    <property type="method" value="EM"/>
    <property type="resolution" value="2.80 A"/>
    <property type="chains" value="Ch=1-517"/>
</dbReference>
<dbReference type="PDB" id="8PV4">
    <property type="method" value="EM"/>
    <property type="resolution" value="2.90 A"/>
    <property type="chains" value="Ch=1-517"/>
</dbReference>
<dbReference type="PDB" id="8PV5">
    <property type="method" value="EM"/>
    <property type="resolution" value="2.86 A"/>
    <property type="chains" value="Ch=1-517"/>
</dbReference>
<dbReference type="PDB" id="8PV6">
    <property type="method" value="EM"/>
    <property type="resolution" value="2.94 A"/>
    <property type="chains" value="Ch=1-517"/>
</dbReference>
<dbReference type="PDB" id="8PV7">
    <property type="method" value="EM"/>
    <property type="resolution" value="2.12 A"/>
    <property type="chains" value="Ch=1-517"/>
</dbReference>
<dbReference type="PDB" id="8PV8">
    <property type="method" value="EM"/>
    <property type="resolution" value="2.91 A"/>
    <property type="chains" value="Ch=1-517"/>
</dbReference>
<dbReference type="PDB" id="8PVK">
    <property type="method" value="EM"/>
    <property type="resolution" value="2.55 A"/>
    <property type="chains" value="Ch=1-517"/>
</dbReference>
<dbReference type="PDB" id="8PVL">
    <property type="method" value="EM"/>
    <property type="resolution" value="2.19 A"/>
    <property type="chains" value="Ch=1-517"/>
</dbReference>
<dbReference type="PDBsum" id="4WJS"/>
<dbReference type="PDBsum" id="6QTA"/>
<dbReference type="PDBsum" id="8PV1"/>
<dbReference type="PDBsum" id="8PV3"/>
<dbReference type="PDBsum" id="8PV4"/>
<dbReference type="PDBsum" id="8PV5"/>
<dbReference type="PDBsum" id="8PV6"/>
<dbReference type="PDBsum" id="8PV7"/>
<dbReference type="PDBsum" id="8PV8"/>
<dbReference type="PDBsum" id="8PVK"/>
<dbReference type="PDBsum" id="8PVL"/>
<dbReference type="EMDB" id="EMD-17950"/>
<dbReference type="EMDB" id="EMD-17951"/>
<dbReference type="EMDB" id="EMD-17952"/>
<dbReference type="EMDB" id="EMD-17953"/>
<dbReference type="EMDB" id="EMD-17954"/>
<dbReference type="EMDB" id="EMD-17955"/>
<dbReference type="EMDB" id="EMD-17956"/>
<dbReference type="EMDB" id="EMD-17957"/>
<dbReference type="EMDB" id="EMD-17969"/>
<dbReference type="EMDB" id="EMD-17970"/>
<dbReference type="SMR" id="G0SC29"/>
<dbReference type="STRING" id="759272.G0SC29"/>
<dbReference type="GeneID" id="18259608"/>
<dbReference type="KEGG" id="cthr:CTHT_0055700"/>
<dbReference type="eggNOG" id="KOG0271">
    <property type="taxonomic scope" value="Eukaryota"/>
</dbReference>
<dbReference type="HOGENOM" id="CLU_000288_57_16_1"/>
<dbReference type="OrthoDB" id="10267436at2759"/>
<dbReference type="EvolutionaryTrace" id="G0SC29"/>
<dbReference type="Proteomes" id="UP000008066">
    <property type="component" value="Unassembled WGS sequence"/>
</dbReference>
<dbReference type="GO" id="GO:0005730">
    <property type="term" value="C:nucleolus"/>
    <property type="evidence" value="ECO:0007669"/>
    <property type="project" value="UniProtKB-SubCell"/>
</dbReference>
<dbReference type="GO" id="GO:0000027">
    <property type="term" value="P:ribosomal large subunit assembly"/>
    <property type="evidence" value="ECO:0007669"/>
    <property type="project" value="TreeGrafter"/>
</dbReference>
<dbReference type="CDD" id="cd00200">
    <property type="entry name" value="WD40"/>
    <property type="match status" value="1"/>
</dbReference>
<dbReference type="FunFam" id="2.130.10.10:FF:000092">
    <property type="entry name" value="notchless protein homolog"/>
    <property type="match status" value="1"/>
</dbReference>
<dbReference type="Gene3D" id="2.130.10.10">
    <property type="entry name" value="YVTN repeat-like/Quinoprotein amine dehydrogenase"/>
    <property type="match status" value="1"/>
</dbReference>
<dbReference type="InterPro" id="IPR020472">
    <property type="entry name" value="G-protein_beta_WD-40_rep"/>
</dbReference>
<dbReference type="InterPro" id="IPR015943">
    <property type="entry name" value="WD40/YVTN_repeat-like_dom_sf"/>
</dbReference>
<dbReference type="InterPro" id="IPR019775">
    <property type="entry name" value="WD40_repeat_CS"/>
</dbReference>
<dbReference type="InterPro" id="IPR036322">
    <property type="entry name" value="WD40_repeat_dom_sf"/>
</dbReference>
<dbReference type="InterPro" id="IPR001680">
    <property type="entry name" value="WD40_rpt"/>
</dbReference>
<dbReference type="PANTHER" id="PTHR19848:SF0">
    <property type="entry name" value="NOTCHLESS PROTEIN HOMOLOG 1"/>
    <property type="match status" value="1"/>
</dbReference>
<dbReference type="PANTHER" id="PTHR19848">
    <property type="entry name" value="WD40 REPEAT PROTEIN"/>
    <property type="match status" value="1"/>
</dbReference>
<dbReference type="Pfam" id="PF00400">
    <property type="entry name" value="WD40"/>
    <property type="match status" value="7"/>
</dbReference>
<dbReference type="PRINTS" id="PR00320">
    <property type="entry name" value="GPROTEINBRPT"/>
</dbReference>
<dbReference type="SMART" id="SM00320">
    <property type="entry name" value="WD40"/>
    <property type="match status" value="8"/>
</dbReference>
<dbReference type="SUPFAM" id="SSF50978">
    <property type="entry name" value="WD40 repeat-like"/>
    <property type="match status" value="1"/>
</dbReference>
<dbReference type="PROSITE" id="PS00678">
    <property type="entry name" value="WD_REPEATS_1"/>
    <property type="match status" value="4"/>
</dbReference>
<dbReference type="PROSITE" id="PS50082">
    <property type="entry name" value="WD_REPEATS_2"/>
    <property type="match status" value="7"/>
</dbReference>
<dbReference type="PROSITE" id="PS50294">
    <property type="entry name" value="WD_REPEATS_REGION"/>
    <property type="match status" value="1"/>
</dbReference>
<gene>
    <name evidence="7" type="ORF">CTHT_0055700</name>
</gene>
<proteinExistence type="evidence at protein level"/>
<protein>
    <recommendedName>
        <fullName evidence="1">Ribosome assembly protein 4</fullName>
    </recommendedName>
    <alternativeName>
        <fullName evidence="2">Notchless protein homolog 1</fullName>
    </alternativeName>
    <alternativeName>
        <fullName evidence="2">Ribosome biogenesis factor RSA4</fullName>
    </alternativeName>
</protein>
<evidence type="ECO:0000250" key="1">
    <source>
        <dbReference type="UniProtKB" id="P25382"/>
    </source>
</evidence>
<evidence type="ECO:0000250" key="2">
    <source>
        <dbReference type="UniProtKB" id="Q9VPR4"/>
    </source>
</evidence>
<evidence type="ECO:0000255" key="3"/>
<evidence type="ECO:0000256" key="4">
    <source>
        <dbReference type="SAM" id="MobiDB-lite"/>
    </source>
</evidence>
<evidence type="ECO:0000305" key="5"/>
<evidence type="ECO:0000305" key="6">
    <source>
    </source>
</evidence>
<evidence type="ECO:0000312" key="7">
    <source>
        <dbReference type="EMBL" id="EGS18955.1"/>
    </source>
</evidence>
<evidence type="ECO:0007829" key="8">
    <source>
        <dbReference type="PDB" id="4WJS"/>
    </source>
</evidence>
<evidence type="ECO:0007829" key="9">
    <source>
        <dbReference type="PDB" id="6QTA"/>
    </source>
</evidence>
<comment type="function">
    <text evidence="1">Involved in ribosome biogenesis. Required for processing and efficient intra-nuclear transport of pre-60S ribosomal subunits. Interacts with the AAA-ATPase Midasin, which is essential for the ATP-dependent dissociation of a group of nonribosomal factors from the pre-60S particle.</text>
</comment>
<comment type="subunit">
    <text evidence="1">Associates with the pre-60S ribosomal particle. Interacts (via WD repeats) with uL18. Interacts (via UBL domain) with MDN1 (via VWFA/MIDAS domain). Interacts (via WD repeats) with NSA2.</text>
</comment>
<comment type="subcellular location">
    <subcellularLocation>
        <location evidence="1">Nucleus</location>
        <location evidence="1">Nucleolus</location>
    </subcellularLocation>
</comment>
<comment type="similarity">
    <text evidence="5">Belongs to the NLE1/RSA4 family.</text>
</comment>
<comment type="sequence caution" evidence="5">
    <conflict type="erroneous gene model prediction">
        <sequence resource="EMBL-CDS" id="EGS18955"/>
    </conflict>
</comment>
<sequence length="517" mass="57549">MATLAPPPSKRQRREEIQRTQTQQDVTPLVATDLGSFKANFIDSDGNQMTDVVEINFADATEKNISNLLNTLLGRDREEFTPYRFRIHIPGKDLIIDQYPNDLLSLLQKHGVTNPFETTITLSAEPQAIFKVHAVSRLAHRIPGHGQPILSCQFSPVSSSRLATGSGDNTARIWDTDSGTPKFTLKGHTGWVLGVSWSPDGKYLATCSMDTTVRVWDPESGKQVNQEFRGHAKWVLALAWQPYHLWRDGTARLASASKDCTVRIWLVNTGRTEHVLSGHKGSVSCVKWGGTDLIYTGSHDRSVRVWDAVKGTLVHNFTAHGHWVNHIALSSDHVLRTAYHDHTKEVPGTEEERRAKAKERFEKAAKIKGKVAERLVSASDDFTMYLWDPTNNGSKPVARLLGHQNKVNHVQFSPDGTLIASAGWDNSTKLWNARDGKFIKNLRGHVAPVYQCAWSADSRLVVTGSKDCTLKVWNVRTGKLAMDLPGHEDEVYAVDWAADGELVASGGKDKAVRTWRN</sequence>
<organism>
    <name type="scientific">Chaetomium thermophilum (strain DSM 1495 / CBS 144.50 / IMI 039719)</name>
    <name type="common">Thermochaetoides thermophila</name>
    <dbReference type="NCBI Taxonomy" id="759272"/>
    <lineage>
        <taxon>Eukaryota</taxon>
        <taxon>Fungi</taxon>
        <taxon>Dikarya</taxon>
        <taxon>Ascomycota</taxon>
        <taxon>Pezizomycotina</taxon>
        <taxon>Sordariomycetes</taxon>
        <taxon>Sordariomycetidae</taxon>
        <taxon>Sordariales</taxon>
        <taxon>Chaetomiaceae</taxon>
        <taxon>Thermochaetoides</taxon>
    </lineage>
</organism>
<keyword id="KW-0002">3D-structure</keyword>
<keyword id="KW-0539">Nucleus</keyword>
<keyword id="KW-1185">Reference proteome</keyword>
<keyword id="KW-0677">Repeat</keyword>
<keyword id="KW-0690">Ribosome biogenesis</keyword>
<keyword id="KW-0853">WD repeat</keyword>
<feature type="chain" id="PRO_0000430589" description="Ribosome assembly protein 4">
    <location>
        <begin position="1"/>
        <end position="517"/>
    </location>
</feature>
<feature type="repeat" description="WD 1" evidence="3">
    <location>
        <begin position="144"/>
        <end position="184"/>
    </location>
</feature>
<feature type="repeat" description="WD 2" evidence="3">
    <location>
        <begin position="187"/>
        <end position="226"/>
    </location>
</feature>
<feature type="repeat" description="WD 3" evidence="3">
    <location>
        <begin position="230"/>
        <end position="277"/>
    </location>
</feature>
<feature type="repeat" description="WD 4" evidence="3">
    <location>
        <begin position="278"/>
        <end position="316"/>
    </location>
</feature>
<feature type="repeat" description="WD 5" evidence="3">
    <location>
        <begin position="351"/>
        <end position="397"/>
    </location>
</feature>
<feature type="repeat" description="WD 6" evidence="3">
    <location>
        <begin position="402"/>
        <end position="441"/>
    </location>
</feature>
<feature type="repeat" description="WD 7" evidence="3">
    <location>
        <begin position="444"/>
        <end position="483"/>
    </location>
</feature>
<feature type="repeat" description="WD 8" evidence="3">
    <location>
        <begin position="486"/>
        <end position="517"/>
    </location>
</feature>
<feature type="region of interest" description="Disordered" evidence="4">
    <location>
        <begin position="1"/>
        <end position="25"/>
    </location>
</feature>
<feature type="region of interest" description="Ubiquitin-like (UBL) domain" evidence="6">
    <location>
        <begin position="34"/>
        <end position="128"/>
    </location>
</feature>
<feature type="turn" evidence="9">
    <location>
        <begin position="30"/>
        <end position="32"/>
    </location>
</feature>
<feature type="strand" evidence="8">
    <location>
        <begin position="36"/>
        <end position="42"/>
    </location>
</feature>
<feature type="strand" evidence="8">
    <location>
        <begin position="53"/>
        <end position="56"/>
    </location>
</feature>
<feature type="helix" evidence="8">
    <location>
        <begin position="57"/>
        <end position="59"/>
    </location>
</feature>
<feature type="helix" evidence="8">
    <location>
        <begin position="62"/>
        <end position="72"/>
    </location>
</feature>
<feature type="helix" evidence="8">
    <location>
        <begin position="77"/>
        <end position="79"/>
    </location>
</feature>
<feature type="strand" evidence="8">
    <location>
        <begin position="83"/>
        <end position="88"/>
    </location>
</feature>
<feature type="helix" evidence="8">
    <location>
        <begin position="103"/>
        <end position="109"/>
    </location>
</feature>
<feature type="helix" evidence="9">
    <location>
        <begin position="115"/>
        <end position="117"/>
    </location>
</feature>
<feature type="strand" evidence="8">
    <location>
        <begin position="123"/>
        <end position="126"/>
    </location>
</feature>
<feature type="strand" evidence="8">
    <location>
        <begin position="137"/>
        <end position="142"/>
    </location>
</feature>
<feature type="strand" evidence="8">
    <location>
        <begin position="149"/>
        <end position="154"/>
    </location>
</feature>
<feature type="strand" evidence="8">
    <location>
        <begin position="161"/>
        <end position="166"/>
    </location>
</feature>
<feature type="strand" evidence="8">
    <location>
        <begin position="171"/>
        <end position="175"/>
    </location>
</feature>
<feature type="turn" evidence="8">
    <location>
        <begin position="176"/>
        <end position="179"/>
    </location>
</feature>
<feature type="strand" evidence="8">
    <location>
        <begin position="180"/>
        <end position="185"/>
    </location>
</feature>
<feature type="strand" evidence="8">
    <location>
        <begin position="192"/>
        <end position="197"/>
    </location>
</feature>
<feature type="strand" evidence="8">
    <location>
        <begin position="204"/>
        <end position="208"/>
    </location>
</feature>
<feature type="strand" evidence="8">
    <location>
        <begin position="213"/>
        <end position="216"/>
    </location>
</feature>
<feature type="turn" evidence="8">
    <location>
        <begin position="218"/>
        <end position="220"/>
    </location>
</feature>
<feature type="strand" evidence="8">
    <location>
        <begin position="235"/>
        <end position="240"/>
    </location>
</feature>
<feature type="helix" evidence="8">
    <location>
        <begin position="243"/>
        <end position="245"/>
    </location>
</feature>
<feature type="strand" evidence="8">
    <location>
        <begin position="252"/>
        <end position="257"/>
    </location>
</feature>
<feature type="strand" evidence="8">
    <location>
        <begin position="262"/>
        <end position="266"/>
    </location>
</feature>
<feature type="turn" evidence="8">
    <location>
        <begin position="267"/>
        <end position="270"/>
    </location>
</feature>
<feature type="strand" evidence="8">
    <location>
        <begin position="271"/>
        <end position="276"/>
    </location>
</feature>
<feature type="strand" evidence="8">
    <location>
        <begin position="283"/>
        <end position="288"/>
    </location>
</feature>
<feature type="strand" evidence="8">
    <location>
        <begin position="292"/>
        <end position="298"/>
    </location>
</feature>
<feature type="strand" evidence="8">
    <location>
        <begin position="303"/>
        <end position="307"/>
    </location>
</feature>
<feature type="turn" evidence="8">
    <location>
        <begin position="308"/>
        <end position="311"/>
    </location>
</feature>
<feature type="strand" evidence="8">
    <location>
        <begin position="312"/>
        <end position="317"/>
    </location>
</feature>
<feature type="strand" evidence="8">
    <location>
        <begin position="324"/>
        <end position="329"/>
    </location>
</feature>
<feature type="helix" evidence="8">
    <location>
        <begin position="332"/>
        <end position="336"/>
    </location>
</feature>
<feature type="turn" evidence="8">
    <location>
        <begin position="337"/>
        <end position="339"/>
    </location>
</feature>
<feature type="helix" evidence="8">
    <location>
        <begin position="350"/>
        <end position="365"/>
    </location>
</feature>
<feature type="strand" evidence="8">
    <location>
        <begin position="375"/>
        <end position="379"/>
    </location>
</feature>
<feature type="strand" evidence="8">
    <location>
        <begin position="384"/>
        <end position="387"/>
    </location>
</feature>
<feature type="helix" evidence="8">
    <location>
        <begin position="389"/>
        <end position="392"/>
    </location>
</feature>
<feature type="strand" evidence="8">
    <location>
        <begin position="397"/>
        <end position="400"/>
    </location>
</feature>
<feature type="strand" evidence="8">
    <location>
        <begin position="407"/>
        <end position="412"/>
    </location>
</feature>
<feature type="strand" evidence="8">
    <location>
        <begin position="416"/>
        <end position="423"/>
    </location>
</feature>
<feature type="strand" evidence="8">
    <location>
        <begin position="428"/>
        <end position="432"/>
    </location>
</feature>
<feature type="turn" evidence="8">
    <location>
        <begin position="433"/>
        <end position="435"/>
    </location>
</feature>
<feature type="strand" evidence="8">
    <location>
        <begin position="438"/>
        <end position="442"/>
    </location>
</feature>
<feature type="strand" evidence="8">
    <location>
        <begin position="449"/>
        <end position="454"/>
    </location>
</feature>
<feature type="strand" evidence="8">
    <location>
        <begin position="458"/>
        <end position="465"/>
    </location>
</feature>
<feature type="strand" evidence="8">
    <location>
        <begin position="470"/>
        <end position="474"/>
    </location>
</feature>
<feature type="turn" evidence="8">
    <location>
        <begin position="475"/>
        <end position="478"/>
    </location>
</feature>
<feature type="strand" evidence="8">
    <location>
        <begin position="479"/>
        <end position="484"/>
    </location>
</feature>
<feature type="strand" evidence="8">
    <location>
        <begin position="491"/>
        <end position="496"/>
    </location>
</feature>
<feature type="strand" evidence="8">
    <location>
        <begin position="500"/>
        <end position="507"/>
    </location>
</feature>
<feature type="strand" evidence="8">
    <location>
        <begin position="512"/>
        <end position="516"/>
    </location>
</feature>